<name>MURC_RICTY</name>
<sequence length="498" mass="55048">MLLLELKKTNQTLGTIHFIGIGGVGMSGIAEILHNLGYKVQGSDLVENYNTKRLESYGIKIFLGHAKQNIKNVSYVVISSAIHQNNPEIKEALERKIPIIRRAEMLAELMRLKCSVAVSGSHGKTTTTSLIACLFEAAGLYPTVINGGIINNKSTNAYLGSSNYLIAEADESDATFIHIPSTIAIITNIDPEHLDYYQDFEILIGAFRSFITNLPFYGFAVCCIDHKIVRKLVDDITERKIITYGIDAEDAHIIAFNINTDIASSTFDVKISLPNVLGTTIIEKITIPTPGRHNILNSLAAIAVGIELDFGIKAIKNGFNNFKGVKRRFTKVAEYNQAVIIDDYAHHPEEIKATLATAKNIANQQNGKVIAIFQPHRYSRIKYLFDDFMLCFADADILYITNIYAAGEKPIEGITGQSLVDKMTQNKYHDKANFLAELDDVVSVIIDHAASGDMIIMMGAGNISSFANELDRRLLSQEILASSQNTDFDTSSYDKVIR</sequence>
<organism>
    <name type="scientific">Rickettsia typhi (strain ATCC VR-144 / Wilmington)</name>
    <dbReference type="NCBI Taxonomy" id="257363"/>
    <lineage>
        <taxon>Bacteria</taxon>
        <taxon>Pseudomonadati</taxon>
        <taxon>Pseudomonadota</taxon>
        <taxon>Alphaproteobacteria</taxon>
        <taxon>Rickettsiales</taxon>
        <taxon>Rickettsiaceae</taxon>
        <taxon>Rickettsieae</taxon>
        <taxon>Rickettsia</taxon>
        <taxon>typhus group</taxon>
    </lineage>
</organism>
<reference key="1">
    <citation type="journal article" date="2004" name="J. Bacteriol.">
        <title>Complete genome sequence of Rickettsia typhi and comparison with sequences of other Rickettsiae.</title>
        <authorList>
            <person name="McLeod M.P."/>
            <person name="Qin X."/>
            <person name="Karpathy S.E."/>
            <person name="Gioia J."/>
            <person name="Highlander S.K."/>
            <person name="Fox G.E."/>
            <person name="McNeill T.Z."/>
            <person name="Jiang H."/>
            <person name="Muzny D."/>
            <person name="Jacob L.S."/>
            <person name="Hawes A.C."/>
            <person name="Sodergren E."/>
            <person name="Gill R."/>
            <person name="Hume J."/>
            <person name="Morgan M."/>
            <person name="Fan G."/>
            <person name="Amin A.G."/>
            <person name="Gibbs R.A."/>
            <person name="Hong C."/>
            <person name="Yu X.-J."/>
            <person name="Walker D.H."/>
            <person name="Weinstock G.M."/>
        </authorList>
    </citation>
    <scope>NUCLEOTIDE SEQUENCE [LARGE SCALE GENOMIC DNA]</scope>
    <source>
        <strain>ATCC VR-144 / Wilmington</strain>
    </source>
</reference>
<comment type="function">
    <text evidence="1">Cell wall formation.</text>
</comment>
<comment type="catalytic activity">
    <reaction evidence="1">
        <text>UDP-N-acetyl-alpha-D-muramate + L-alanine + ATP = UDP-N-acetyl-alpha-D-muramoyl-L-alanine + ADP + phosphate + H(+)</text>
        <dbReference type="Rhea" id="RHEA:23372"/>
        <dbReference type="ChEBI" id="CHEBI:15378"/>
        <dbReference type="ChEBI" id="CHEBI:30616"/>
        <dbReference type="ChEBI" id="CHEBI:43474"/>
        <dbReference type="ChEBI" id="CHEBI:57972"/>
        <dbReference type="ChEBI" id="CHEBI:70757"/>
        <dbReference type="ChEBI" id="CHEBI:83898"/>
        <dbReference type="ChEBI" id="CHEBI:456216"/>
        <dbReference type="EC" id="6.3.2.8"/>
    </reaction>
</comment>
<comment type="pathway">
    <text evidence="1">Cell wall biogenesis; peptidoglycan biosynthesis.</text>
</comment>
<comment type="subcellular location">
    <subcellularLocation>
        <location evidence="1">Cytoplasm</location>
    </subcellularLocation>
</comment>
<comment type="similarity">
    <text evidence="1">Belongs to the MurCDEF family.</text>
</comment>
<accession>Q68XC2</accession>
<protein>
    <recommendedName>
        <fullName evidence="1">UDP-N-acetylmuramate--L-alanine ligase</fullName>
        <ecNumber evidence="1">6.3.2.8</ecNumber>
    </recommendedName>
    <alternativeName>
        <fullName evidence="1">UDP-N-acetylmuramoyl-L-alanine synthetase</fullName>
    </alternativeName>
</protein>
<proteinExistence type="inferred from homology"/>
<feature type="chain" id="PRO_0000182144" description="UDP-N-acetylmuramate--L-alanine ligase">
    <location>
        <begin position="1"/>
        <end position="498"/>
    </location>
</feature>
<feature type="binding site" evidence="1">
    <location>
        <begin position="120"/>
        <end position="126"/>
    </location>
    <ligand>
        <name>ATP</name>
        <dbReference type="ChEBI" id="CHEBI:30616"/>
    </ligand>
</feature>
<gene>
    <name evidence="1" type="primary">murC</name>
    <name type="ordered locus">RT0239</name>
</gene>
<dbReference type="EC" id="6.3.2.8" evidence="1"/>
<dbReference type="EMBL" id="AE017197">
    <property type="protein sequence ID" value="AAU03720.1"/>
    <property type="molecule type" value="Genomic_DNA"/>
</dbReference>
<dbReference type="RefSeq" id="WP_011190705.1">
    <property type="nucleotide sequence ID" value="NC_006142.1"/>
</dbReference>
<dbReference type="SMR" id="Q68XC2"/>
<dbReference type="KEGG" id="rty:RT0239"/>
<dbReference type="eggNOG" id="COG0773">
    <property type="taxonomic scope" value="Bacteria"/>
</dbReference>
<dbReference type="HOGENOM" id="CLU_028104_2_2_5"/>
<dbReference type="OrthoDB" id="9804126at2"/>
<dbReference type="UniPathway" id="UPA00219"/>
<dbReference type="Proteomes" id="UP000000604">
    <property type="component" value="Chromosome"/>
</dbReference>
<dbReference type="GO" id="GO:0005737">
    <property type="term" value="C:cytoplasm"/>
    <property type="evidence" value="ECO:0007669"/>
    <property type="project" value="UniProtKB-SubCell"/>
</dbReference>
<dbReference type="GO" id="GO:0005524">
    <property type="term" value="F:ATP binding"/>
    <property type="evidence" value="ECO:0007669"/>
    <property type="project" value="UniProtKB-UniRule"/>
</dbReference>
<dbReference type="GO" id="GO:0008763">
    <property type="term" value="F:UDP-N-acetylmuramate-L-alanine ligase activity"/>
    <property type="evidence" value="ECO:0007669"/>
    <property type="project" value="UniProtKB-UniRule"/>
</dbReference>
<dbReference type="GO" id="GO:0051301">
    <property type="term" value="P:cell division"/>
    <property type="evidence" value="ECO:0007669"/>
    <property type="project" value="UniProtKB-KW"/>
</dbReference>
<dbReference type="GO" id="GO:0071555">
    <property type="term" value="P:cell wall organization"/>
    <property type="evidence" value="ECO:0007669"/>
    <property type="project" value="UniProtKB-KW"/>
</dbReference>
<dbReference type="GO" id="GO:0009252">
    <property type="term" value="P:peptidoglycan biosynthetic process"/>
    <property type="evidence" value="ECO:0007669"/>
    <property type="project" value="UniProtKB-UniRule"/>
</dbReference>
<dbReference type="GO" id="GO:0008360">
    <property type="term" value="P:regulation of cell shape"/>
    <property type="evidence" value="ECO:0007669"/>
    <property type="project" value="UniProtKB-KW"/>
</dbReference>
<dbReference type="Gene3D" id="3.90.190.20">
    <property type="entry name" value="Mur ligase, C-terminal domain"/>
    <property type="match status" value="1"/>
</dbReference>
<dbReference type="Gene3D" id="3.40.1190.10">
    <property type="entry name" value="Mur-like, catalytic domain"/>
    <property type="match status" value="1"/>
</dbReference>
<dbReference type="Gene3D" id="3.40.50.720">
    <property type="entry name" value="NAD(P)-binding Rossmann-like Domain"/>
    <property type="match status" value="1"/>
</dbReference>
<dbReference type="HAMAP" id="MF_00046">
    <property type="entry name" value="MurC"/>
    <property type="match status" value="1"/>
</dbReference>
<dbReference type="InterPro" id="IPR036565">
    <property type="entry name" value="Mur-like_cat_sf"/>
</dbReference>
<dbReference type="InterPro" id="IPR004101">
    <property type="entry name" value="Mur_ligase_C"/>
</dbReference>
<dbReference type="InterPro" id="IPR036615">
    <property type="entry name" value="Mur_ligase_C_dom_sf"/>
</dbReference>
<dbReference type="InterPro" id="IPR013221">
    <property type="entry name" value="Mur_ligase_cen"/>
</dbReference>
<dbReference type="InterPro" id="IPR000713">
    <property type="entry name" value="Mur_ligase_N"/>
</dbReference>
<dbReference type="InterPro" id="IPR050061">
    <property type="entry name" value="MurCDEF_pg_biosynth"/>
</dbReference>
<dbReference type="InterPro" id="IPR005758">
    <property type="entry name" value="UDP-N-AcMur_Ala_ligase_MurC"/>
</dbReference>
<dbReference type="NCBIfam" id="TIGR01082">
    <property type="entry name" value="murC"/>
    <property type="match status" value="1"/>
</dbReference>
<dbReference type="PANTHER" id="PTHR43445:SF3">
    <property type="entry name" value="UDP-N-ACETYLMURAMATE--L-ALANINE LIGASE"/>
    <property type="match status" value="1"/>
</dbReference>
<dbReference type="PANTHER" id="PTHR43445">
    <property type="entry name" value="UDP-N-ACETYLMURAMATE--L-ALANINE LIGASE-RELATED"/>
    <property type="match status" value="1"/>
</dbReference>
<dbReference type="Pfam" id="PF01225">
    <property type="entry name" value="Mur_ligase"/>
    <property type="match status" value="1"/>
</dbReference>
<dbReference type="Pfam" id="PF02875">
    <property type="entry name" value="Mur_ligase_C"/>
    <property type="match status" value="1"/>
</dbReference>
<dbReference type="Pfam" id="PF08245">
    <property type="entry name" value="Mur_ligase_M"/>
    <property type="match status" value="1"/>
</dbReference>
<dbReference type="SUPFAM" id="SSF51984">
    <property type="entry name" value="MurCD N-terminal domain"/>
    <property type="match status" value="1"/>
</dbReference>
<dbReference type="SUPFAM" id="SSF53623">
    <property type="entry name" value="MurD-like peptide ligases, catalytic domain"/>
    <property type="match status" value="1"/>
</dbReference>
<dbReference type="SUPFAM" id="SSF53244">
    <property type="entry name" value="MurD-like peptide ligases, peptide-binding domain"/>
    <property type="match status" value="1"/>
</dbReference>
<evidence type="ECO:0000255" key="1">
    <source>
        <dbReference type="HAMAP-Rule" id="MF_00046"/>
    </source>
</evidence>
<keyword id="KW-0067">ATP-binding</keyword>
<keyword id="KW-0131">Cell cycle</keyword>
<keyword id="KW-0132">Cell division</keyword>
<keyword id="KW-0133">Cell shape</keyword>
<keyword id="KW-0961">Cell wall biogenesis/degradation</keyword>
<keyword id="KW-0963">Cytoplasm</keyword>
<keyword id="KW-0436">Ligase</keyword>
<keyword id="KW-0547">Nucleotide-binding</keyword>
<keyword id="KW-0573">Peptidoglycan synthesis</keyword>